<keyword id="KW-0028">Amino-acid biosynthesis</keyword>
<keyword id="KW-0963">Cytoplasm</keyword>
<keyword id="KW-0315">Glutamine amidotransferase</keyword>
<keyword id="KW-0368">Histidine biosynthesis</keyword>
<keyword id="KW-0378">Hydrolase</keyword>
<keyword id="KW-0456">Lyase</keyword>
<name>HIS5_BRUAB</name>
<reference key="1">
    <citation type="journal article" date="2005" name="J. Bacteriol.">
        <title>Completion of the genome sequence of Brucella abortus and comparison to the highly similar genomes of Brucella melitensis and Brucella suis.</title>
        <authorList>
            <person name="Halling S.M."/>
            <person name="Peterson-Burch B.D."/>
            <person name="Bricker B.J."/>
            <person name="Zuerner R.L."/>
            <person name="Qing Z."/>
            <person name="Li L.-L."/>
            <person name="Kapur V."/>
            <person name="Alt D.P."/>
            <person name="Olsen S.C."/>
        </authorList>
    </citation>
    <scope>NUCLEOTIDE SEQUENCE [LARGE SCALE GENOMIC DNA]</scope>
    <source>
        <strain>9-941</strain>
    </source>
</reference>
<sequence>MRVAIIDYGSGNLRSATKAFERAAHESGISAEIDLTCDAQRVASADRIVLPGVGAYADCRRGLDAAPGMVEALNDTVLKKARPFLGICVGMQLMSERGLEKTVTNGLGWIAGDVREMVPSDASLKIPQIGWNRIHVKHSHPIFDGIPTGDDGLHAYFVHSYMLDAKNASDVLAVTDYGGDVTAAVGRDNMVGTQFHPEKSQLLGLSLIANFLKWKP</sequence>
<dbReference type="EC" id="4.3.2.10" evidence="1"/>
<dbReference type="EC" id="3.5.1.2" evidence="1"/>
<dbReference type="EMBL" id="AE017223">
    <property type="protein sequence ID" value="AAX75359.1"/>
    <property type="molecule type" value="Genomic_DNA"/>
</dbReference>
<dbReference type="RefSeq" id="WP_002967037.1">
    <property type="nucleotide sequence ID" value="NC_006932.1"/>
</dbReference>
<dbReference type="SMR" id="Q57AH5"/>
<dbReference type="EnsemblBacteria" id="AAX75359">
    <property type="protein sequence ID" value="AAX75359"/>
    <property type="gene ID" value="BruAb1_2058"/>
</dbReference>
<dbReference type="GeneID" id="93017606"/>
<dbReference type="KEGG" id="bmb:BruAb1_2058"/>
<dbReference type="HOGENOM" id="CLU_071837_2_0_5"/>
<dbReference type="UniPathway" id="UPA00031">
    <property type="reaction ID" value="UER00010"/>
</dbReference>
<dbReference type="Proteomes" id="UP000000540">
    <property type="component" value="Chromosome I"/>
</dbReference>
<dbReference type="GO" id="GO:0005737">
    <property type="term" value="C:cytoplasm"/>
    <property type="evidence" value="ECO:0007669"/>
    <property type="project" value="UniProtKB-SubCell"/>
</dbReference>
<dbReference type="GO" id="GO:0004359">
    <property type="term" value="F:glutaminase activity"/>
    <property type="evidence" value="ECO:0007669"/>
    <property type="project" value="UniProtKB-EC"/>
</dbReference>
<dbReference type="GO" id="GO:0000107">
    <property type="term" value="F:imidazoleglycerol-phosphate synthase activity"/>
    <property type="evidence" value="ECO:0007669"/>
    <property type="project" value="UniProtKB-UniRule"/>
</dbReference>
<dbReference type="GO" id="GO:0016829">
    <property type="term" value="F:lyase activity"/>
    <property type="evidence" value="ECO:0007669"/>
    <property type="project" value="UniProtKB-KW"/>
</dbReference>
<dbReference type="GO" id="GO:0000105">
    <property type="term" value="P:L-histidine biosynthetic process"/>
    <property type="evidence" value="ECO:0007669"/>
    <property type="project" value="UniProtKB-UniRule"/>
</dbReference>
<dbReference type="CDD" id="cd01748">
    <property type="entry name" value="GATase1_IGP_Synthase"/>
    <property type="match status" value="1"/>
</dbReference>
<dbReference type="Gene3D" id="3.40.50.880">
    <property type="match status" value="1"/>
</dbReference>
<dbReference type="HAMAP" id="MF_00278">
    <property type="entry name" value="HisH"/>
    <property type="match status" value="1"/>
</dbReference>
<dbReference type="InterPro" id="IPR029062">
    <property type="entry name" value="Class_I_gatase-like"/>
</dbReference>
<dbReference type="InterPro" id="IPR017926">
    <property type="entry name" value="GATASE"/>
</dbReference>
<dbReference type="InterPro" id="IPR010139">
    <property type="entry name" value="Imidazole-glycPsynth_HisH"/>
</dbReference>
<dbReference type="NCBIfam" id="TIGR01855">
    <property type="entry name" value="IMP_synth_hisH"/>
    <property type="match status" value="1"/>
</dbReference>
<dbReference type="PANTHER" id="PTHR42701">
    <property type="entry name" value="IMIDAZOLE GLYCEROL PHOSPHATE SYNTHASE SUBUNIT HISH"/>
    <property type="match status" value="1"/>
</dbReference>
<dbReference type="PANTHER" id="PTHR42701:SF1">
    <property type="entry name" value="IMIDAZOLE GLYCEROL PHOSPHATE SYNTHASE SUBUNIT HISH"/>
    <property type="match status" value="1"/>
</dbReference>
<dbReference type="Pfam" id="PF00117">
    <property type="entry name" value="GATase"/>
    <property type="match status" value="1"/>
</dbReference>
<dbReference type="PIRSF" id="PIRSF000495">
    <property type="entry name" value="Amidotransf_hisH"/>
    <property type="match status" value="1"/>
</dbReference>
<dbReference type="SUPFAM" id="SSF52317">
    <property type="entry name" value="Class I glutamine amidotransferase-like"/>
    <property type="match status" value="1"/>
</dbReference>
<dbReference type="PROSITE" id="PS51273">
    <property type="entry name" value="GATASE_TYPE_1"/>
    <property type="match status" value="1"/>
</dbReference>
<organism>
    <name type="scientific">Brucella abortus biovar 1 (strain 9-941)</name>
    <dbReference type="NCBI Taxonomy" id="262698"/>
    <lineage>
        <taxon>Bacteria</taxon>
        <taxon>Pseudomonadati</taxon>
        <taxon>Pseudomonadota</taxon>
        <taxon>Alphaproteobacteria</taxon>
        <taxon>Hyphomicrobiales</taxon>
        <taxon>Brucellaceae</taxon>
        <taxon>Brucella/Ochrobactrum group</taxon>
        <taxon>Brucella</taxon>
    </lineage>
</organism>
<feature type="chain" id="PRO_0000231707" description="Imidazole glycerol phosphate synthase subunit HisH">
    <location>
        <begin position="1"/>
        <end position="216"/>
    </location>
</feature>
<feature type="domain" description="Glutamine amidotransferase type-1" evidence="1">
    <location>
        <begin position="2"/>
        <end position="216"/>
    </location>
</feature>
<feature type="active site" description="Nucleophile" evidence="1">
    <location>
        <position position="88"/>
    </location>
</feature>
<feature type="active site" evidence="1">
    <location>
        <position position="196"/>
    </location>
</feature>
<feature type="active site" evidence="1">
    <location>
        <position position="198"/>
    </location>
</feature>
<accession>Q57AH5</accession>
<proteinExistence type="inferred from homology"/>
<protein>
    <recommendedName>
        <fullName evidence="1">Imidazole glycerol phosphate synthase subunit HisH</fullName>
        <ecNumber evidence="1">4.3.2.10</ecNumber>
    </recommendedName>
    <alternativeName>
        <fullName evidence="1">IGP synthase glutaminase subunit</fullName>
        <ecNumber evidence="1">3.5.1.2</ecNumber>
    </alternativeName>
    <alternativeName>
        <fullName evidence="1">IGP synthase subunit HisH</fullName>
    </alternativeName>
    <alternativeName>
        <fullName evidence="1">ImGP synthase subunit HisH</fullName>
        <shortName evidence="1">IGPS subunit HisH</shortName>
    </alternativeName>
</protein>
<gene>
    <name evidence="1" type="primary">hisH</name>
    <name type="ordered locus">BruAb1_2058</name>
</gene>
<comment type="function">
    <text evidence="1">IGPS catalyzes the conversion of PRFAR and glutamine to IGP, AICAR and glutamate. The HisH subunit catalyzes the hydrolysis of glutamine to glutamate and ammonia as part of the synthesis of IGP and AICAR. The resulting ammonia molecule is channeled to the active site of HisF.</text>
</comment>
<comment type="catalytic activity">
    <reaction evidence="1">
        <text>5-[(5-phospho-1-deoxy-D-ribulos-1-ylimino)methylamino]-1-(5-phospho-beta-D-ribosyl)imidazole-4-carboxamide + L-glutamine = D-erythro-1-(imidazol-4-yl)glycerol 3-phosphate + 5-amino-1-(5-phospho-beta-D-ribosyl)imidazole-4-carboxamide + L-glutamate + H(+)</text>
        <dbReference type="Rhea" id="RHEA:24793"/>
        <dbReference type="ChEBI" id="CHEBI:15378"/>
        <dbReference type="ChEBI" id="CHEBI:29985"/>
        <dbReference type="ChEBI" id="CHEBI:58278"/>
        <dbReference type="ChEBI" id="CHEBI:58359"/>
        <dbReference type="ChEBI" id="CHEBI:58475"/>
        <dbReference type="ChEBI" id="CHEBI:58525"/>
        <dbReference type="EC" id="4.3.2.10"/>
    </reaction>
</comment>
<comment type="catalytic activity">
    <reaction evidence="1">
        <text>L-glutamine + H2O = L-glutamate + NH4(+)</text>
        <dbReference type="Rhea" id="RHEA:15889"/>
        <dbReference type="ChEBI" id="CHEBI:15377"/>
        <dbReference type="ChEBI" id="CHEBI:28938"/>
        <dbReference type="ChEBI" id="CHEBI:29985"/>
        <dbReference type="ChEBI" id="CHEBI:58359"/>
        <dbReference type="EC" id="3.5.1.2"/>
    </reaction>
</comment>
<comment type="pathway">
    <text evidence="1">Amino-acid biosynthesis; L-histidine biosynthesis; L-histidine from 5-phospho-alpha-D-ribose 1-diphosphate: step 5/9.</text>
</comment>
<comment type="subunit">
    <text evidence="1">Heterodimer of HisH and HisF.</text>
</comment>
<comment type="subcellular location">
    <subcellularLocation>
        <location evidence="1">Cytoplasm</location>
    </subcellularLocation>
</comment>
<evidence type="ECO:0000255" key="1">
    <source>
        <dbReference type="HAMAP-Rule" id="MF_00278"/>
    </source>
</evidence>